<sequence>MTELSKAEKVLKEFIIQMNQWELKYYPLFRNEGMTAYKDAAKKELDDIYDLFCTKKERKQGRQISLSCGEPPEYSPDEEVLSSELNKNKCVFITQQYTEAKNKFRYTLQFKEDEWRIDKKERFSFYDDKWIKYNL</sequence>
<dbReference type="EMBL" id="CP002038">
    <property type="protein sequence ID" value="ADM97065.1"/>
    <property type="molecule type" value="Genomic_DNA"/>
</dbReference>
<dbReference type="RefSeq" id="WP_013316541.1">
    <property type="nucleotide sequence ID" value="NC_014500.1"/>
</dbReference>
<dbReference type="SMR" id="E0SAK7"/>
<dbReference type="STRING" id="198628.Dda3937_01757"/>
<dbReference type="KEGG" id="ddd:Dda3937_01757"/>
<dbReference type="eggNOG" id="ENOG5033I80">
    <property type="taxonomic scope" value="Bacteria"/>
</dbReference>
<dbReference type="HOGENOM" id="CLU_146044_0_0_6"/>
<dbReference type="OrthoDB" id="9019065at2"/>
<dbReference type="Proteomes" id="UP000006859">
    <property type="component" value="Chromosome"/>
</dbReference>
<dbReference type="InterPro" id="IPR028049">
    <property type="entry name" value="Imm-NTF2"/>
</dbReference>
<dbReference type="Pfam" id="PF15655">
    <property type="entry name" value="Imm-NTF2"/>
    <property type="match status" value="1"/>
</dbReference>
<protein>
    <recommendedName>
        <fullName>Immunity protein RhsIA</fullName>
    </recommendedName>
</protein>
<gene>
    <name type="primary">rhsIA</name>
    <name type="ordered locus">Dda3937_01757</name>
</gene>
<accession>E0SAK7</accession>
<keyword id="KW-1185">Reference proteome</keyword>
<feature type="chain" id="PRO_0000423979" description="Immunity protein RhsIA">
    <location>
        <begin position="1"/>
        <end position="135"/>
    </location>
</feature>
<feature type="region of interest" description="Disordered" evidence="1">
    <location>
        <begin position="58"/>
        <end position="77"/>
    </location>
</feature>
<evidence type="ECO:0000256" key="1">
    <source>
        <dbReference type="SAM" id="MobiDB-lite"/>
    </source>
</evidence>
<evidence type="ECO:0000269" key="2">
    <source>
    </source>
</evidence>
<proteinExistence type="evidence at protein level"/>
<name>RHSIA_DICD3</name>
<reference key="1">
    <citation type="journal article" date="2011" name="J. Bacteriol.">
        <title>Genome sequence of the plant-pathogenic bacterium Dickeya dadantii 3937.</title>
        <authorList>
            <person name="Glasner J.D."/>
            <person name="Yang C.H."/>
            <person name="Reverchon S."/>
            <person name="Hugouvieux-Cotte-Pattat N."/>
            <person name="Condemine G."/>
            <person name="Bohin J.P."/>
            <person name="Van Gijsegem F."/>
            <person name="Yang S."/>
            <person name="Franza T."/>
            <person name="Expert D."/>
            <person name="Plunkett G. III"/>
            <person name="San Francisco M.J."/>
            <person name="Charkowski A.O."/>
            <person name="Py B."/>
            <person name="Bell K."/>
            <person name="Rauscher L."/>
            <person name="Rodriguez-Palenzuela P."/>
            <person name="Toussaint A."/>
            <person name="Holeva M.C."/>
            <person name="He S.Y."/>
            <person name="Douet V."/>
            <person name="Boccara M."/>
            <person name="Blanco C."/>
            <person name="Toth I."/>
            <person name="Anderson B.D."/>
            <person name="Biehl B.S."/>
            <person name="Mau B."/>
            <person name="Flynn S.M."/>
            <person name="Barras F."/>
            <person name="Lindeberg M."/>
            <person name="Birch P.R."/>
            <person name="Tsuyumu S."/>
            <person name="Shi X."/>
            <person name="Hibbing M."/>
            <person name="Yap M.N."/>
            <person name="Carpentier M."/>
            <person name="Dassa E."/>
            <person name="Umehara M."/>
            <person name="Kim J.F."/>
            <person name="Rusch M."/>
            <person name="Soni P."/>
            <person name="Mayhew G.F."/>
            <person name="Fouts D.E."/>
            <person name="Gill S.R."/>
            <person name="Blattner F.R."/>
            <person name="Keen N.T."/>
            <person name="Perna N.T."/>
        </authorList>
    </citation>
    <scope>NUCLEOTIDE SEQUENCE [LARGE SCALE GENOMIC DNA]</scope>
    <source>
        <strain>3937</strain>
    </source>
</reference>
<reference key="2">
    <citation type="journal article" date="2013" name="Proc. Natl. Acad. Sci. U.S.A.">
        <title>Rhs proteins from diverse bacteria mediate intercellular competition.</title>
        <authorList>
            <person name="Koskiniemi S."/>
            <person name="Lamoureux J.G."/>
            <person name="Nikolakakis K.C."/>
            <person name="t'Kint de Roodenbeke C."/>
            <person name="Kaplan M.D."/>
            <person name="Low D.A."/>
            <person name="Hayes C.S."/>
        </authorList>
    </citation>
    <scope>FUNCTION AS AN IMMUNITY PROTEIN</scope>
    <scope>EXPRESSION IN E.COLI</scope>
    <scope>DISRUPTION PHENOTYPE</scope>
    <source>
        <strain>3937</strain>
    </source>
</reference>
<organism>
    <name type="scientific">Dickeya dadantii (strain 3937)</name>
    <name type="common">Erwinia chrysanthemi (strain 3937)</name>
    <dbReference type="NCBI Taxonomy" id="198628"/>
    <lineage>
        <taxon>Bacteria</taxon>
        <taxon>Pseudomonadati</taxon>
        <taxon>Pseudomonadota</taxon>
        <taxon>Gammaproteobacteria</taxon>
        <taxon>Enterobacterales</taxon>
        <taxon>Pectobacteriaceae</taxon>
        <taxon>Dickeya</taxon>
    </lineage>
</organism>
<comment type="function">
    <text evidence="2">Immunity component of a toxin-immunity protein module, which functions as a cellular contact-dependent growth inhibition (CDI) system. Specifically inhibits its cognate toxin RhsA. Cell contact is necessary for growth inhibition.</text>
</comment>
<comment type="disruption phenotype">
    <text evidence="2">A double rhsA-rhsIA deletion is outcompeted by wild-type cells, restoration of rhsIA restores normal growth in competition experiments. Restoration of growth requires the RhsA-specific immunity protein, rhsIB does not restore growth.</text>
</comment>